<gene>
    <name evidence="1" type="primary">uxaC</name>
    <name type="ordered locus">SPC_3205</name>
</gene>
<protein>
    <recommendedName>
        <fullName evidence="1">Uronate isomerase</fullName>
        <ecNumber evidence="1">5.3.1.12</ecNumber>
    </recommendedName>
    <alternativeName>
        <fullName evidence="1">Glucuronate isomerase</fullName>
    </alternativeName>
    <alternativeName>
        <fullName evidence="1">Uronic isomerase</fullName>
    </alternativeName>
</protein>
<dbReference type="EC" id="5.3.1.12" evidence="1"/>
<dbReference type="EMBL" id="CP000857">
    <property type="protein sequence ID" value="ACN47290.1"/>
    <property type="molecule type" value="Genomic_DNA"/>
</dbReference>
<dbReference type="RefSeq" id="WP_000190182.1">
    <property type="nucleotide sequence ID" value="NC_012125.1"/>
</dbReference>
<dbReference type="SMR" id="C0PYB6"/>
<dbReference type="KEGG" id="sei:SPC_3205"/>
<dbReference type="HOGENOM" id="CLU_044465_1_0_6"/>
<dbReference type="UniPathway" id="UPA00246"/>
<dbReference type="Proteomes" id="UP000001599">
    <property type="component" value="Chromosome"/>
</dbReference>
<dbReference type="GO" id="GO:0008880">
    <property type="term" value="F:glucuronate isomerase activity"/>
    <property type="evidence" value="ECO:0007669"/>
    <property type="project" value="UniProtKB-UniRule"/>
</dbReference>
<dbReference type="GO" id="GO:0019698">
    <property type="term" value="P:D-galacturonate catabolic process"/>
    <property type="evidence" value="ECO:0007669"/>
    <property type="project" value="TreeGrafter"/>
</dbReference>
<dbReference type="GO" id="GO:0042840">
    <property type="term" value="P:D-glucuronate catabolic process"/>
    <property type="evidence" value="ECO:0007669"/>
    <property type="project" value="TreeGrafter"/>
</dbReference>
<dbReference type="Gene3D" id="3.20.20.140">
    <property type="entry name" value="Metal-dependent hydrolases"/>
    <property type="match status" value="1"/>
</dbReference>
<dbReference type="Gene3D" id="1.10.2020.10">
    <property type="entry name" value="uronate isomerase, domain 2, chain A"/>
    <property type="match status" value="1"/>
</dbReference>
<dbReference type="HAMAP" id="MF_00675">
    <property type="entry name" value="UxaC"/>
    <property type="match status" value="1"/>
</dbReference>
<dbReference type="InterPro" id="IPR032466">
    <property type="entry name" value="Metal_Hydrolase"/>
</dbReference>
<dbReference type="InterPro" id="IPR003766">
    <property type="entry name" value="Uronate_isomerase"/>
</dbReference>
<dbReference type="NCBIfam" id="NF002794">
    <property type="entry name" value="PRK02925.1"/>
    <property type="match status" value="1"/>
</dbReference>
<dbReference type="PANTHER" id="PTHR30068">
    <property type="entry name" value="URONATE ISOMERASE"/>
    <property type="match status" value="1"/>
</dbReference>
<dbReference type="PANTHER" id="PTHR30068:SF4">
    <property type="entry name" value="URONATE ISOMERASE"/>
    <property type="match status" value="1"/>
</dbReference>
<dbReference type="Pfam" id="PF02614">
    <property type="entry name" value="UxaC"/>
    <property type="match status" value="1"/>
</dbReference>
<dbReference type="SUPFAM" id="SSF51556">
    <property type="entry name" value="Metallo-dependent hydrolases"/>
    <property type="match status" value="1"/>
</dbReference>
<name>UXAC_SALPC</name>
<sequence length="470" mass="53610">MATFMTEDFLLKNDIARTLYHKYAAPMPIYDFHCHLSPQEIADDRRFDNLGQIWLEGDHYKWRALRSAGVDESLITGKETSDYEKYMAWANTVPKTLGNPLYHWTHLELRRPFGITGTLFGPDTAESIWTQCNEKLATPAFSARGIMQQMNVRMVGTTDDPIDSLEYHRQIAADDSIDIEVAPSWRPDKVFKIELDGFVDYLRKLEAAADVSITRFDDLRQALTRRLDHFAACGCRASDHGIETLRFAPVPDDAQLDAILGKRLAGETLSELEIAQFTTAVLVWLGRQYAARGWVMQLHIGAIRNNNTRMFRLLGPDTGFDSIGDNNISWALSRLLDSMDVTNELPKTILYCLNPRDNEVLATMIGNFQGPGIAGKVQFGSGWWFNDQKDGMLRQLEQLSQMGLLSQFVGMLTDSRSFLSYTRHEYFRRILCNLLGQWAQDGEIPDDEAMLSRMVQDICFNNAQRYFTIK</sequence>
<feature type="chain" id="PRO_1000147691" description="Uronate isomerase">
    <location>
        <begin position="1"/>
        <end position="470"/>
    </location>
</feature>
<evidence type="ECO:0000255" key="1">
    <source>
        <dbReference type="HAMAP-Rule" id="MF_00675"/>
    </source>
</evidence>
<reference key="1">
    <citation type="journal article" date="2009" name="PLoS ONE">
        <title>Salmonella paratyphi C: genetic divergence from Salmonella choleraesuis and pathogenic convergence with Salmonella typhi.</title>
        <authorList>
            <person name="Liu W.-Q."/>
            <person name="Feng Y."/>
            <person name="Wang Y."/>
            <person name="Zou Q.-H."/>
            <person name="Chen F."/>
            <person name="Guo J.-T."/>
            <person name="Peng Y.-H."/>
            <person name="Jin Y."/>
            <person name="Li Y.-G."/>
            <person name="Hu S.-N."/>
            <person name="Johnston R.N."/>
            <person name="Liu G.-R."/>
            <person name="Liu S.-L."/>
        </authorList>
    </citation>
    <scope>NUCLEOTIDE SEQUENCE [LARGE SCALE GENOMIC DNA]</scope>
    <source>
        <strain>RKS4594</strain>
    </source>
</reference>
<comment type="catalytic activity">
    <reaction evidence="1">
        <text>D-glucuronate = D-fructuronate</text>
        <dbReference type="Rhea" id="RHEA:13049"/>
        <dbReference type="ChEBI" id="CHEBI:58720"/>
        <dbReference type="ChEBI" id="CHEBI:59863"/>
        <dbReference type="EC" id="5.3.1.12"/>
    </reaction>
</comment>
<comment type="catalytic activity">
    <reaction evidence="1">
        <text>aldehydo-D-galacturonate = keto-D-tagaturonate</text>
        <dbReference type="Rhea" id="RHEA:27702"/>
        <dbReference type="ChEBI" id="CHEBI:12952"/>
        <dbReference type="ChEBI" id="CHEBI:17886"/>
        <dbReference type="EC" id="5.3.1.12"/>
    </reaction>
</comment>
<comment type="pathway">
    <text evidence="1">Carbohydrate metabolism; pentose and glucuronate interconversion.</text>
</comment>
<comment type="similarity">
    <text evidence="1">Belongs to the metallo-dependent hydrolases superfamily. Uronate isomerase family.</text>
</comment>
<organism>
    <name type="scientific">Salmonella paratyphi C (strain RKS4594)</name>
    <dbReference type="NCBI Taxonomy" id="476213"/>
    <lineage>
        <taxon>Bacteria</taxon>
        <taxon>Pseudomonadati</taxon>
        <taxon>Pseudomonadota</taxon>
        <taxon>Gammaproteobacteria</taxon>
        <taxon>Enterobacterales</taxon>
        <taxon>Enterobacteriaceae</taxon>
        <taxon>Salmonella</taxon>
    </lineage>
</organism>
<keyword id="KW-0413">Isomerase</keyword>
<proteinExistence type="inferred from homology"/>
<accession>C0PYB6</accession>